<reference key="1">
    <citation type="journal article" date="1998" name="Hum. Mol. Genet.">
        <title>Diabetes insipidus, diabetes mellitus, optic atrophy and deafness (DIDMOAD) caused by mutations in a novel gene (wolframin) coding for a predicted transmembrane protein.</title>
        <authorList>
            <person name="Strom T.M."/>
            <person name="Hoertnagel K."/>
            <person name="Hofmann S."/>
            <person name="Gekeler F."/>
            <person name="Scharfe C."/>
            <person name="Rabl W."/>
            <person name="Gerbitz K.-D."/>
            <person name="Meitinger T."/>
        </authorList>
    </citation>
    <scope>NUCLEOTIDE SEQUENCE [MRNA]</scope>
</reference>
<reference key="2">
    <citation type="journal article" date="1998" name="Nat. Genet.">
        <title>A gene encoding a transmembrane protein is mutated in patients with diabetes mellitus and optic atrophy (Wolfram Syndrome).</title>
        <authorList>
            <person name="Inoue H."/>
            <person name="Tanizawa Y."/>
            <person name="Wasson J."/>
            <person name="Behn P."/>
            <person name="Kalidas K."/>
            <person name="Bernal-Mizrachi E."/>
            <person name="Mueckler M."/>
            <person name="Marshall H."/>
            <person name="Donis-Keller H."/>
            <person name="Crock P."/>
            <person name="Rogers D."/>
            <person name="Mikuni M."/>
            <person name="Kumashiro H."/>
            <person name="Higashi K."/>
            <person name="Sobue G."/>
            <person name="Oka Y."/>
            <person name="Permutt M.A."/>
        </authorList>
    </citation>
    <scope>NUCLEOTIDE SEQUENCE [MRNA]</scope>
    <source>
        <tissue>Insulinoma</tissue>
    </source>
</reference>
<reference key="3">
    <citation type="journal article" date="2004" name="Biochem. Biophys. Res. Commun.">
        <title>Endoplasmic reticulum stress and N-glycosylation modulate expression of WFS1 protein.</title>
        <authorList>
            <person name="Yamaguchi S."/>
            <person name="Ishihara H."/>
            <person name="Tamura A."/>
            <person name="Yamada T."/>
            <person name="Takahashi R."/>
            <person name="Takei D."/>
            <person name="Katagiri H."/>
            <person name="Oka Y."/>
        </authorList>
    </citation>
    <scope>GLYCOSYLATION AT ASN-663 AND ASN-748</scope>
</reference>
<reference key="4">
    <citation type="journal article" date="2010" name="Cell">
        <title>A tissue-specific atlas of mouse protein phosphorylation and expression.</title>
        <authorList>
            <person name="Huttlin E.L."/>
            <person name="Jedrychowski M.P."/>
            <person name="Elias J.E."/>
            <person name="Goswami T."/>
            <person name="Rad R."/>
            <person name="Beausoleil S.A."/>
            <person name="Villen J."/>
            <person name="Haas W."/>
            <person name="Sowa M.E."/>
            <person name="Gygi S.P."/>
        </authorList>
    </citation>
    <scope>PHOSPHORYLATION [LARGE SCALE ANALYSIS] AT SER-32 AND SER-158</scope>
    <scope>IDENTIFICATION BY MASS SPECTROMETRY [LARGE SCALE ANALYSIS]</scope>
    <source>
        <tissue>Brain</tissue>
        <tissue>Brown adipose tissue</tissue>
        <tissue>Heart</tissue>
        <tissue>Kidney</tissue>
        <tissue>Pancreas</tissue>
    </source>
</reference>
<reference key="5">
    <citation type="journal article" date="2013" name="Eur. J. Hum. Genet.">
        <title>Wolfram gene (WFS1) mutation causes autosomal dominant congenital nuclear cataract in humans.</title>
        <authorList>
            <person name="Berry V."/>
            <person name="Gregory-Evans C."/>
            <person name="Emmett W."/>
            <person name="Waseem N."/>
            <person name="Raby J."/>
            <person name="Prescott D."/>
            <person name="Moore A.T."/>
            <person name="Bhattacharya S.S."/>
        </authorList>
    </citation>
    <scope>TISSUE SPECIFICITY</scope>
</reference>
<protein>
    <recommendedName>
        <fullName>Wolframin</fullName>
    </recommendedName>
</protein>
<keyword id="KW-0007">Acetylation</keyword>
<keyword id="KW-0968">Cytoplasmic vesicle</keyword>
<keyword id="KW-0256">Endoplasmic reticulum</keyword>
<keyword id="KW-0325">Glycoprotein</keyword>
<keyword id="KW-0472">Membrane</keyword>
<keyword id="KW-0597">Phosphoprotein</keyword>
<keyword id="KW-1185">Reference proteome</keyword>
<keyword id="KW-0812">Transmembrane</keyword>
<keyword id="KW-1133">Transmembrane helix</keyword>
<name>WFS1_MOUSE</name>
<proteinExistence type="evidence at protein level"/>
<sequence>MNSGTPPPSPSGPPPPPAPQPQARARLNATASLEQDKIEPPRAPRPQADPSAGRSAGEAAAPEPRAPQTGSREETDRAGPMKADVEIPFEEVLEKAKAGDPKAQTEVGKHYLRLANDADEELNSCSAVAWLILAAKQGRREAVKLLRRCLADRKGITSENEAEVKQLSSETDLERAVRKAALVMYWKLNPKKKKQVAVSELLENVGQVNEQDGGAQPGPVPKSLQKQRRMLERLVSSESKNYIALDDFVELTKKYAKGIIPTNLFLQDEDEDEDELAGKSPEDLPLRQKVVKYPLHAIMEIKEYLIDVASKAGMHWLSTIVPTHHINALIFFFIISNLTIDFFAFFIPLVVFYLSFVSMVICTLKVFQDSKAWENFRTLTDLLLRFEPNLDVEQAEVNFGWNHLEPYIHFLLSVVFVIFSFPLASKDCIPCSELAVISTFFTVTSYMSLSSSAEPYTRRALVTEVAAGLLSLLPTVPVDWRFLKVLGQTFFTVPVGHFIILNVSLPCLLYVYLFYLFFRMAQLRNFKGTYCYLVPYLVCFMWCELSVVILLQSTGLGLVRASIGYFLFLFALPILVAGLALMGTVQFARWFLSLDLTKIMVTTVICGVPLLFRWWTKANFSVMGMVKSLTKSSMVKLILVWLTAILLFCWFYVYRSEGMKVYNSTLTWQQYGFLCGPRAWKETNMARTQILCSHLEGHRVTWTGRFKYVRVTEIDNSAESAINMLPFFLGDWMRCLYGEAYPSCSSGNTSTAEEELCRLKQLAKHPCHIKKFDRYKFEITVGMPFGTNGNRGHEEDDITKDIVLRASSEFKDVLLNLRQGSLIEFSTILEGRLGSKWPVFELKAISCLNCMTQLSPARRHVKIEQDWRSTVHGALKFAFDFFFFPFLSAA</sequence>
<feature type="chain" id="PRO_0000065964" description="Wolframin">
    <location>
        <begin position="1"/>
        <end position="890"/>
    </location>
</feature>
<feature type="transmembrane region" description="Helical" evidence="2">
    <location>
        <begin position="314"/>
        <end position="334"/>
    </location>
</feature>
<feature type="transmembrane region" description="Helical" evidence="2">
    <location>
        <begin position="340"/>
        <end position="360"/>
    </location>
</feature>
<feature type="transmembrane region" description="Helical" evidence="2">
    <location>
        <begin position="402"/>
        <end position="422"/>
    </location>
</feature>
<feature type="transmembrane region" description="Helical" evidence="2">
    <location>
        <begin position="427"/>
        <end position="447"/>
    </location>
</feature>
<feature type="transmembrane region" description="Helical" evidence="2">
    <location>
        <begin position="465"/>
        <end position="485"/>
    </location>
</feature>
<feature type="transmembrane region" description="Helical" evidence="2">
    <location>
        <begin position="496"/>
        <end position="516"/>
    </location>
</feature>
<feature type="transmembrane region" description="Helical" evidence="2">
    <location>
        <begin position="529"/>
        <end position="549"/>
    </location>
</feature>
<feature type="transmembrane region" description="Helical" evidence="2">
    <location>
        <begin position="563"/>
        <end position="583"/>
    </location>
</feature>
<feature type="transmembrane region" description="Helical" evidence="2">
    <location>
        <begin position="589"/>
        <end position="609"/>
    </location>
</feature>
<feature type="transmembrane region" description="Helical" evidence="2">
    <location>
        <begin position="632"/>
        <end position="652"/>
    </location>
</feature>
<feature type="topological domain" description="Lumenal" evidence="2">
    <location>
        <begin position="653"/>
        <end position="869"/>
    </location>
</feature>
<feature type="transmembrane region" description="Helical" evidence="2">
    <location>
        <begin position="870"/>
        <end position="890"/>
    </location>
</feature>
<feature type="region of interest" description="Interaction with ATP6V1A" evidence="1">
    <location>
        <begin position="1"/>
        <end position="323"/>
    </location>
</feature>
<feature type="region of interest" description="Disordered" evidence="3">
    <location>
        <begin position="1"/>
        <end position="83"/>
    </location>
</feature>
<feature type="region of interest" description="Disordered" evidence="3">
    <location>
        <begin position="208"/>
        <end position="227"/>
    </location>
</feature>
<feature type="compositionally biased region" description="Pro residues" evidence="3">
    <location>
        <begin position="1"/>
        <end position="20"/>
    </location>
</feature>
<feature type="compositionally biased region" description="Low complexity" evidence="3">
    <location>
        <begin position="50"/>
        <end position="67"/>
    </location>
</feature>
<feature type="compositionally biased region" description="Basic and acidic residues" evidence="3">
    <location>
        <begin position="71"/>
        <end position="83"/>
    </location>
</feature>
<feature type="modified residue" description="N-acetylmethionine" evidence="1">
    <location>
        <position position="1"/>
    </location>
</feature>
<feature type="modified residue" description="Phosphothreonine" evidence="1">
    <location>
        <position position="30"/>
    </location>
</feature>
<feature type="modified residue" description="Phosphoserine" evidence="7">
    <location>
        <position position="32"/>
    </location>
</feature>
<feature type="modified residue" description="Phosphoserine" evidence="7">
    <location>
        <position position="158"/>
    </location>
</feature>
<feature type="glycosylation site" description="N-linked (GlcNAc...) asparagine" evidence="4">
    <location>
        <position position="663"/>
    </location>
</feature>
<feature type="glycosylation site" description="N-linked (GlcNAc...) asparagine" evidence="4">
    <location>
        <position position="748"/>
    </location>
</feature>
<feature type="sequence conflict" description="In Ref. 2; AAC64944." evidence="6" ref="2">
    <original>A</original>
    <variation>V</variation>
    <location>
        <position position="215"/>
    </location>
</feature>
<dbReference type="EMBL" id="AJ011971">
    <property type="protein sequence ID" value="CAA09892.1"/>
    <property type="molecule type" value="mRNA"/>
</dbReference>
<dbReference type="EMBL" id="AF084482">
    <property type="protein sequence ID" value="AAC64944.1"/>
    <property type="molecule type" value="mRNA"/>
</dbReference>
<dbReference type="CCDS" id="CCDS19245.1"/>
<dbReference type="RefSeq" id="NP_035846.1">
    <property type="nucleotide sequence ID" value="NM_011716.2"/>
</dbReference>
<dbReference type="SMR" id="P56695"/>
<dbReference type="BioGRID" id="204558">
    <property type="interactions" value="18"/>
</dbReference>
<dbReference type="FunCoup" id="P56695">
    <property type="interactions" value="1001"/>
</dbReference>
<dbReference type="IntAct" id="P56695">
    <property type="interactions" value="1"/>
</dbReference>
<dbReference type="STRING" id="10090.ENSMUSP00000048053"/>
<dbReference type="GlyConnect" id="2828">
    <property type="glycosylation" value="5 N-Linked glycans (1 site)"/>
</dbReference>
<dbReference type="GlyCosmos" id="P56695">
    <property type="glycosylation" value="2 sites, 5 glycans"/>
</dbReference>
<dbReference type="GlyGen" id="P56695">
    <property type="glycosylation" value="5 sites, 9 N-linked glycans (4 sites), 1 O-linked glycan (1 site)"/>
</dbReference>
<dbReference type="iPTMnet" id="P56695"/>
<dbReference type="PhosphoSitePlus" id="P56695"/>
<dbReference type="SwissPalm" id="P56695"/>
<dbReference type="jPOST" id="P56695"/>
<dbReference type="PaxDb" id="10090-ENSMUSP00000048053"/>
<dbReference type="PeptideAtlas" id="P56695"/>
<dbReference type="ProteomicsDB" id="299674"/>
<dbReference type="Pumba" id="P56695"/>
<dbReference type="Antibodypedia" id="22653">
    <property type="antibodies" value="175 antibodies from 28 providers"/>
</dbReference>
<dbReference type="Ensembl" id="ENSMUST00000043964.13">
    <property type="protein sequence ID" value="ENSMUSP00000048053.7"/>
    <property type="gene ID" value="ENSMUSG00000039474.14"/>
</dbReference>
<dbReference type="GeneID" id="22393"/>
<dbReference type="KEGG" id="mmu:22393"/>
<dbReference type="UCSC" id="uc008xff.1">
    <property type="organism name" value="mouse"/>
</dbReference>
<dbReference type="AGR" id="MGI:1328355"/>
<dbReference type="CTD" id="7466"/>
<dbReference type="MGI" id="MGI:1328355">
    <property type="gene designation" value="Wfs1"/>
</dbReference>
<dbReference type="VEuPathDB" id="HostDB:ENSMUSG00000039474"/>
<dbReference type="eggNOG" id="ENOG502QSC1">
    <property type="taxonomic scope" value="Eukaryota"/>
</dbReference>
<dbReference type="GeneTree" id="ENSGT00390000016928"/>
<dbReference type="HOGENOM" id="CLU_014606_0_0_1"/>
<dbReference type="InParanoid" id="P56695"/>
<dbReference type="OMA" id="QFARWFM"/>
<dbReference type="OrthoDB" id="5865303at2759"/>
<dbReference type="PhylomeDB" id="P56695"/>
<dbReference type="TreeFam" id="TF326849"/>
<dbReference type="Reactome" id="R-MMU-381426">
    <property type="pathway name" value="Regulation of Insulin-like Growth Factor (IGF) transport and uptake by Insulin-like Growth Factor Binding Proteins (IGFBPs)"/>
</dbReference>
<dbReference type="Reactome" id="R-MMU-8957275">
    <property type="pathway name" value="Post-translational protein phosphorylation"/>
</dbReference>
<dbReference type="BioGRID-ORCS" id="22393">
    <property type="hits" value="1 hit in 78 CRISPR screens"/>
</dbReference>
<dbReference type="CD-CODE" id="CE726F99">
    <property type="entry name" value="Postsynaptic density"/>
</dbReference>
<dbReference type="ChiTaRS" id="Wfs1">
    <property type="organism name" value="mouse"/>
</dbReference>
<dbReference type="PRO" id="PR:P56695"/>
<dbReference type="Proteomes" id="UP000000589">
    <property type="component" value="Chromosome 5"/>
</dbReference>
<dbReference type="RNAct" id="P56695">
    <property type="molecule type" value="protein"/>
</dbReference>
<dbReference type="Bgee" id="ENSMUSG00000039474">
    <property type="expression patterns" value="Expressed in olfactory tubercle and 268 other cell types or tissues"/>
</dbReference>
<dbReference type="ExpressionAtlas" id="P56695">
    <property type="expression patterns" value="baseline and differential"/>
</dbReference>
<dbReference type="GO" id="GO:0030425">
    <property type="term" value="C:dendrite"/>
    <property type="evidence" value="ECO:0000250"/>
    <property type="project" value="BHF-UCL"/>
</dbReference>
<dbReference type="GO" id="GO:0005783">
    <property type="term" value="C:endoplasmic reticulum"/>
    <property type="evidence" value="ECO:0000314"/>
    <property type="project" value="BHF-UCL"/>
</dbReference>
<dbReference type="GO" id="GO:0005789">
    <property type="term" value="C:endoplasmic reticulum membrane"/>
    <property type="evidence" value="ECO:0000250"/>
    <property type="project" value="BHF-UCL"/>
</dbReference>
<dbReference type="GO" id="GO:0030141">
    <property type="term" value="C:secretory granule"/>
    <property type="evidence" value="ECO:0000250"/>
    <property type="project" value="UniProtKB"/>
</dbReference>
<dbReference type="GO" id="GO:0030672">
    <property type="term" value="C:synaptic vesicle membrane"/>
    <property type="evidence" value="ECO:0007669"/>
    <property type="project" value="Ensembl"/>
</dbReference>
<dbReference type="GO" id="GO:0051117">
    <property type="term" value="F:ATPase binding"/>
    <property type="evidence" value="ECO:0000314"/>
    <property type="project" value="BHF-UCL"/>
</dbReference>
<dbReference type="GO" id="GO:0048306">
    <property type="term" value="F:calcium-dependent protein binding"/>
    <property type="evidence" value="ECO:0007669"/>
    <property type="project" value="Ensembl"/>
</dbReference>
<dbReference type="GO" id="GO:0005516">
    <property type="term" value="F:calmodulin binding"/>
    <property type="evidence" value="ECO:0007669"/>
    <property type="project" value="Ensembl"/>
</dbReference>
<dbReference type="GO" id="GO:0140297">
    <property type="term" value="F:DNA-binding transcription factor binding"/>
    <property type="evidence" value="ECO:0007669"/>
    <property type="project" value="Ensembl"/>
</dbReference>
<dbReference type="GO" id="GO:0070628">
    <property type="term" value="F:proteasome binding"/>
    <property type="evidence" value="ECO:0007669"/>
    <property type="project" value="Ensembl"/>
</dbReference>
<dbReference type="GO" id="GO:0140597">
    <property type="term" value="F:protein carrier chaperone"/>
    <property type="evidence" value="ECO:0007669"/>
    <property type="project" value="Ensembl"/>
</dbReference>
<dbReference type="GO" id="GO:0031625">
    <property type="term" value="F:ubiquitin protein ligase binding"/>
    <property type="evidence" value="ECO:0007669"/>
    <property type="project" value="Ensembl"/>
</dbReference>
<dbReference type="GO" id="GO:0055074">
    <property type="term" value="P:calcium ion homeostasis"/>
    <property type="evidence" value="ECO:0000250"/>
    <property type="project" value="BHF-UCL"/>
</dbReference>
<dbReference type="GO" id="GO:0032469">
    <property type="term" value="P:endoplasmic reticulum calcium ion homeostasis"/>
    <property type="evidence" value="ECO:0000250"/>
    <property type="project" value="BHF-UCL"/>
</dbReference>
<dbReference type="GO" id="GO:0030968">
    <property type="term" value="P:endoplasmic reticulum unfolded protein response"/>
    <property type="evidence" value="ECO:0000315"/>
    <property type="project" value="BHF-UCL"/>
</dbReference>
<dbReference type="GO" id="GO:0006983">
    <property type="term" value="P:ER overload response"/>
    <property type="evidence" value="ECO:0007669"/>
    <property type="project" value="Ensembl"/>
</dbReference>
<dbReference type="GO" id="GO:0036503">
    <property type="term" value="P:ERAD pathway"/>
    <property type="evidence" value="ECO:0000315"/>
    <property type="project" value="ParkinsonsUK-UCL"/>
</dbReference>
<dbReference type="GO" id="GO:0042593">
    <property type="term" value="P:glucose homeostasis"/>
    <property type="evidence" value="ECO:0000250"/>
    <property type="project" value="BHF-UCL"/>
</dbReference>
<dbReference type="GO" id="GO:0001822">
    <property type="term" value="P:kidney development"/>
    <property type="evidence" value="ECO:0000250"/>
    <property type="project" value="BHF-UCL"/>
</dbReference>
<dbReference type="GO" id="GO:0043066">
    <property type="term" value="P:negative regulation of apoptotic process"/>
    <property type="evidence" value="ECO:0000250"/>
    <property type="project" value="UniProtKB"/>
</dbReference>
<dbReference type="GO" id="GO:1903892">
    <property type="term" value="P:negative regulation of ATF6-mediated unfolded protein response"/>
    <property type="evidence" value="ECO:0007669"/>
    <property type="project" value="Ensembl"/>
</dbReference>
<dbReference type="GO" id="GO:1902236">
    <property type="term" value="P:negative regulation of endoplasmic reticulum stress-induced intrinsic apoptotic signaling pathway"/>
    <property type="evidence" value="ECO:0000315"/>
    <property type="project" value="BHF-UCL"/>
</dbReference>
<dbReference type="GO" id="GO:0043524">
    <property type="term" value="P:negative regulation of neuron apoptotic process"/>
    <property type="evidence" value="ECO:0000250"/>
    <property type="project" value="BHF-UCL"/>
</dbReference>
<dbReference type="GO" id="GO:0043069">
    <property type="term" value="P:negative regulation of programmed cell death"/>
    <property type="evidence" value="ECO:0000250"/>
    <property type="project" value="BHF-UCL"/>
</dbReference>
<dbReference type="GO" id="GO:1903573">
    <property type="term" value="P:negative regulation of response to endoplasmic reticulum stress"/>
    <property type="evidence" value="ECO:0000250"/>
    <property type="project" value="UniProtKB"/>
</dbReference>
<dbReference type="GO" id="GO:0000122">
    <property type="term" value="P:negative regulation of transcription by RNA polymerase II"/>
    <property type="evidence" value="ECO:0007669"/>
    <property type="project" value="Ensembl"/>
</dbReference>
<dbReference type="GO" id="GO:0017148">
    <property type="term" value="P:negative regulation of translation"/>
    <property type="evidence" value="ECO:0000315"/>
    <property type="project" value="MGI"/>
</dbReference>
<dbReference type="GO" id="GO:2000675">
    <property type="term" value="P:negative regulation of type B pancreatic cell apoptotic process"/>
    <property type="evidence" value="ECO:0000315"/>
    <property type="project" value="BHF-UCL"/>
</dbReference>
<dbReference type="GO" id="GO:0050877">
    <property type="term" value="P:nervous system process"/>
    <property type="evidence" value="ECO:0000250"/>
    <property type="project" value="BHF-UCL"/>
</dbReference>
<dbReference type="GO" id="GO:0042048">
    <property type="term" value="P:olfactory behavior"/>
    <property type="evidence" value="ECO:0007669"/>
    <property type="project" value="Ensembl"/>
</dbReference>
<dbReference type="GO" id="GO:0031016">
    <property type="term" value="P:pancreas development"/>
    <property type="evidence" value="ECO:0007669"/>
    <property type="project" value="Ensembl"/>
</dbReference>
<dbReference type="GO" id="GO:0051928">
    <property type="term" value="P:positive regulation of calcium ion transport"/>
    <property type="evidence" value="ECO:0000250"/>
    <property type="project" value="BHF-UCL"/>
</dbReference>
<dbReference type="GO" id="GO:1904294">
    <property type="term" value="P:positive regulation of ERAD pathway"/>
    <property type="evidence" value="ECO:0000315"/>
    <property type="project" value="MGI"/>
</dbReference>
<dbReference type="GO" id="GO:0045927">
    <property type="term" value="P:positive regulation of growth"/>
    <property type="evidence" value="ECO:0000315"/>
    <property type="project" value="BHF-UCL"/>
</dbReference>
<dbReference type="GO" id="GO:0051247">
    <property type="term" value="P:positive regulation of protein metabolic process"/>
    <property type="evidence" value="ECO:0000250"/>
    <property type="project" value="BHF-UCL"/>
</dbReference>
<dbReference type="GO" id="GO:0031398">
    <property type="term" value="P:positive regulation of protein ubiquitination"/>
    <property type="evidence" value="ECO:0000315"/>
    <property type="project" value="ParkinsonsUK-UCL"/>
</dbReference>
<dbReference type="GO" id="GO:0050821">
    <property type="term" value="P:protein stabilization"/>
    <property type="evidence" value="ECO:0000315"/>
    <property type="project" value="ParkinsonsUK-UCL"/>
</dbReference>
<dbReference type="GO" id="GO:0051726">
    <property type="term" value="P:regulation of cell cycle"/>
    <property type="evidence" value="ECO:0000303"/>
    <property type="project" value="BHF-UCL"/>
</dbReference>
<dbReference type="GO" id="GO:0003091">
    <property type="term" value="P:renal water homeostasis"/>
    <property type="evidence" value="ECO:0000250"/>
    <property type="project" value="BHF-UCL"/>
</dbReference>
<dbReference type="GO" id="GO:0034976">
    <property type="term" value="P:response to endoplasmic reticulum stress"/>
    <property type="evidence" value="ECO:0000314"/>
    <property type="project" value="BHF-UCL"/>
</dbReference>
<dbReference type="GO" id="GO:0007605">
    <property type="term" value="P:sensory perception of sound"/>
    <property type="evidence" value="ECO:0000250"/>
    <property type="project" value="BHF-UCL"/>
</dbReference>
<dbReference type="GO" id="GO:0007601">
    <property type="term" value="P:visual perception"/>
    <property type="evidence" value="ECO:0000250"/>
    <property type="project" value="BHF-UCL"/>
</dbReference>
<dbReference type="FunFam" id="1.25.40.10:FF:000479">
    <property type="entry name" value="Wolfram syndrome 1 (Wolframin)"/>
    <property type="match status" value="1"/>
</dbReference>
<dbReference type="Gene3D" id="1.25.40.10">
    <property type="entry name" value="Tetratricopeptide repeat domain"/>
    <property type="match status" value="1"/>
</dbReference>
<dbReference type="InterPro" id="IPR011990">
    <property type="entry name" value="TPR-like_helical_dom_sf"/>
</dbReference>
<dbReference type="InterPro" id="IPR026208">
    <property type="entry name" value="Wolframin"/>
</dbReference>
<dbReference type="InterPro" id="IPR045400">
    <property type="entry name" value="Wolframin_Cys-rich"/>
</dbReference>
<dbReference type="InterPro" id="IPR045460">
    <property type="entry name" value="Wolframin_EF-hand"/>
</dbReference>
<dbReference type="InterPro" id="IPR026209">
    <property type="entry name" value="Wolframin_fam"/>
</dbReference>
<dbReference type="InterPro" id="IPR045461">
    <property type="entry name" value="Wolframin_OB_fold"/>
</dbReference>
<dbReference type="InterPro" id="IPR045458">
    <property type="entry name" value="Wolframin_Sel1-like_rpt"/>
</dbReference>
<dbReference type="PANTHER" id="PTHR13098">
    <property type="entry name" value="WOLFRAMIN"/>
    <property type="match status" value="1"/>
</dbReference>
<dbReference type="PANTHER" id="PTHR13098:SF3">
    <property type="entry name" value="WOLFRAMIN"/>
    <property type="match status" value="1"/>
</dbReference>
<dbReference type="Pfam" id="PF20053">
    <property type="entry name" value="WC-rich"/>
    <property type="match status" value="1"/>
</dbReference>
<dbReference type="Pfam" id="PF19913">
    <property type="entry name" value="WCOB"/>
    <property type="match status" value="1"/>
</dbReference>
<dbReference type="Pfam" id="PF19914">
    <property type="entry name" value="WEF-hand"/>
    <property type="match status" value="1"/>
</dbReference>
<dbReference type="Pfam" id="PF20023">
    <property type="entry name" value="WSLR"/>
    <property type="match status" value="2"/>
</dbReference>
<dbReference type="PRINTS" id="PR02060">
    <property type="entry name" value="WOLFFAMILY"/>
</dbReference>
<dbReference type="PRINTS" id="PR02061">
    <property type="entry name" value="WOLFRAMIN"/>
</dbReference>
<accession>P56695</accession>
<accession>Q9Z276</accession>
<gene>
    <name type="primary">Wfs1</name>
</gene>
<comment type="function">
    <text evidence="1">Participates in the regulation of cellular Ca(2+) homeostasis, at least partly, by modulating the filling state of the endoplasmic reticulum Ca(2+) store (By similarity). Negatively regulates the ER stress response and positively regulates the stability of V-ATPase subunits ATP6V1A and ATP1B1 by preventing their degradation through an unknown proteasome-independent mechanism (By similarity).</text>
</comment>
<comment type="subunit">
    <text evidence="1">Interacts with ATP6V1A.</text>
</comment>
<comment type="subcellular location">
    <subcellularLocation>
        <location evidence="1">Endoplasmic reticulum membrane</location>
        <topology evidence="2">Multi-pass membrane protein</topology>
    </subcellularLocation>
    <subcellularLocation>
        <location evidence="1">Cytoplasmic vesicle</location>
        <location evidence="1">Secretory vesicle</location>
    </subcellularLocation>
    <text evidence="1">Co-localizes with ATP6V1A in the secretory granules in neuroblastoma cell lines.</text>
</comment>
<comment type="tissue specificity">
    <text evidence="5">Highly expressed in the developing lens.</text>
</comment>
<evidence type="ECO:0000250" key="1">
    <source>
        <dbReference type="UniProtKB" id="O76024"/>
    </source>
</evidence>
<evidence type="ECO:0000255" key="2"/>
<evidence type="ECO:0000256" key="3">
    <source>
        <dbReference type="SAM" id="MobiDB-lite"/>
    </source>
</evidence>
<evidence type="ECO:0000269" key="4">
    <source>
    </source>
</evidence>
<evidence type="ECO:0000269" key="5">
    <source>
    </source>
</evidence>
<evidence type="ECO:0000305" key="6"/>
<evidence type="ECO:0007744" key="7">
    <source>
    </source>
</evidence>
<organism>
    <name type="scientific">Mus musculus</name>
    <name type="common">Mouse</name>
    <dbReference type="NCBI Taxonomy" id="10090"/>
    <lineage>
        <taxon>Eukaryota</taxon>
        <taxon>Metazoa</taxon>
        <taxon>Chordata</taxon>
        <taxon>Craniata</taxon>
        <taxon>Vertebrata</taxon>
        <taxon>Euteleostomi</taxon>
        <taxon>Mammalia</taxon>
        <taxon>Eutheria</taxon>
        <taxon>Euarchontoglires</taxon>
        <taxon>Glires</taxon>
        <taxon>Rodentia</taxon>
        <taxon>Myomorpha</taxon>
        <taxon>Muroidea</taxon>
        <taxon>Muridae</taxon>
        <taxon>Murinae</taxon>
        <taxon>Mus</taxon>
        <taxon>Mus</taxon>
    </lineage>
</organism>